<protein>
    <recommendedName>
        <fullName evidence="13">Beta-1,4-xylosyltransferase IRX9</fullName>
        <ecNumber evidence="10">2.4.2.24</ecNumber>
    </recommendedName>
    <alternativeName>
        <fullName evidence="12">Protein IRREGULAR XYLEM 9</fullName>
    </alternativeName>
    <alternativeName>
        <fullName evidence="13">Xylan xylosyltransferase IRX9</fullName>
    </alternativeName>
</protein>
<reference key="1">
    <citation type="journal article" date="1999" name="Nature">
        <title>Sequence and analysis of chromosome 2 of the plant Arabidopsis thaliana.</title>
        <authorList>
            <person name="Lin X."/>
            <person name="Kaul S."/>
            <person name="Rounsley S.D."/>
            <person name="Shea T.P."/>
            <person name="Benito M.-I."/>
            <person name="Town C.D."/>
            <person name="Fujii C.Y."/>
            <person name="Mason T.M."/>
            <person name="Bowman C.L."/>
            <person name="Barnstead M.E."/>
            <person name="Feldblyum T.V."/>
            <person name="Buell C.R."/>
            <person name="Ketchum K.A."/>
            <person name="Lee J.J."/>
            <person name="Ronning C.M."/>
            <person name="Koo H.L."/>
            <person name="Moffat K.S."/>
            <person name="Cronin L.A."/>
            <person name="Shen M."/>
            <person name="Pai G."/>
            <person name="Van Aken S."/>
            <person name="Umayam L."/>
            <person name="Tallon L.J."/>
            <person name="Gill J.E."/>
            <person name="Adams M.D."/>
            <person name="Carrera A.J."/>
            <person name="Creasy T.H."/>
            <person name="Goodman H.M."/>
            <person name="Somerville C.R."/>
            <person name="Copenhaver G.P."/>
            <person name="Preuss D."/>
            <person name="Nierman W.C."/>
            <person name="White O."/>
            <person name="Eisen J.A."/>
            <person name="Salzberg S.L."/>
            <person name="Fraser C.M."/>
            <person name="Venter J.C."/>
        </authorList>
    </citation>
    <scope>NUCLEOTIDE SEQUENCE [LARGE SCALE GENOMIC DNA]</scope>
    <source>
        <strain>cv. Columbia</strain>
    </source>
</reference>
<reference key="2">
    <citation type="journal article" date="2017" name="Plant J.">
        <title>Araport11: a complete reannotation of the Arabidopsis thaliana reference genome.</title>
        <authorList>
            <person name="Cheng C.Y."/>
            <person name="Krishnakumar V."/>
            <person name="Chan A.P."/>
            <person name="Thibaud-Nissen F."/>
            <person name="Schobel S."/>
            <person name="Town C.D."/>
        </authorList>
    </citation>
    <scope>GENOME REANNOTATION</scope>
    <source>
        <strain>cv. Columbia</strain>
    </source>
</reference>
<reference key="3">
    <citation type="submission" date="2004-07" db="EMBL/GenBank/DDBJ databases">
        <title>Arabidopsis ORF clones.</title>
        <authorList>
            <person name="Cheuk R.F."/>
            <person name="Chen H."/>
            <person name="Kim C.J."/>
            <person name="Shinn P."/>
            <person name="Ecker J.R."/>
        </authorList>
    </citation>
    <scope>NUCLEOTIDE SEQUENCE [LARGE SCALE MRNA]</scope>
    <source>
        <strain>cv. Columbia</strain>
    </source>
</reference>
<reference key="4">
    <citation type="submission" date="2004-10" db="EMBL/GenBank/DDBJ databases">
        <title>Arabidopsis ORF clones.</title>
        <authorList>
            <person name="Kim C.J."/>
            <person name="Chen H."/>
            <person name="Cheuk R."/>
            <person name="Shinn P."/>
            <person name="Ecker J.R."/>
        </authorList>
    </citation>
    <scope>NUCLEOTIDE SEQUENCE [LARGE SCALE MRNA]</scope>
    <source>
        <strain>cv. Columbia</strain>
    </source>
</reference>
<reference key="5">
    <citation type="journal article" date="2005" name="Plant Cell">
        <title>Identification of novel genes in Arabidopsis involved in secondary cell wall formation using expression profiling and reverse genetics.</title>
        <authorList>
            <person name="Brown D.M."/>
            <person name="Zeef L.A.H."/>
            <person name="Ellis J."/>
            <person name="Goodacre R."/>
            <person name="Turner S.R."/>
        </authorList>
    </citation>
    <scope>FUNCTION</scope>
    <scope>DISRUPTION PHENOTYPE</scope>
</reference>
<reference key="6">
    <citation type="journal article" date="2006" name="Proc. Natl. Acad. Sci. U.S.A.">
        <title>Development and application of a suite of polysaccharide-degrading enzymes for analyzing plant cell walls.</title>
        <authorList>
            <person name="Bauer S."/>
            <person name="Vasu P."/>
            <person name="Persson S."/>
            <person name="Mort A.J."/>
            <person name="Somerville C.R."/>
        </authorList>
    </citation>
    <scope>FUNCTION</scope>
    <scope>DISRUPTION PHENOTYPE</scope>
</reference>
<reference key="7">
    <citation type="journal article" date="2007" name="Plant J.">
        <title>Comparison of five xylan synthesis mutants reveals new insight into the mechanisms of xylan synthesis.</title>
        <authorList>
            <person name="Brown D.M."/>
            <person name="Goubet F."/>
            <person name="Wong V.W."/>
            <person name="Goodacre R."/>
            <person name="Stephens E."/>
            <person name="Dupree P."/>
            <person name="Turner S.R."/>
        </authorList>
    </citation>
    <scope>FUNCTION</scope>
    <scope>DISRUPTION PHENOTYPE</scope>
</reference>
<reference key="8">
    <citation type="journal article" date="2007" name="Plant Cell">
        <title>Arabidopsis irregular xylem8 and irregular xylem9: implications for the complexity of glucuronoxylan biosynthesis.</title>
        <authorList>
            <person name="Pena M.J."/>
            <person name="Zhong R."/>
            <person name="Zhou G.K."/>
            <person name="Richardson E.A."/>
            <person name="O'Neill M.A."/>
            <person name="Darvill A.G."/>
            <person name="York W.S."/>
            <person name="Ye Z.H."/>
        </authorList>
    </citation>
    <scope>FUNCTION</scope>
    <scope>SUBCELLULAR LOCATION</scope>
    <scope>TISSUE SPECIFICITY</scope>
    <scope>DISRUPTION PHENOTYPE</scope>
</reference>
<reference key="9">
    <citation type="journal article" date="2007" name="Plant Cell Physiol.">
        <title>The irregular xylem9 mutant is deficient in xylan xylosyltransferase activity.</title>
        <authorList>
            <person name="Lee C."/>
            <person name="O'Neill M.A."/>
            <person name="Tsumuraya Y."/>
            <person name="Darvill A.G."/>
            <person name="Ye Z.H."/>
        </authorList>
    </citation>
    <scope>FUNCTION</scope>
</reference>
<reference key="10">
    <citation type="journal article" date="2010" name="Plant Physiol.">
        <title>The Arabidopsis family GT43 glycosyltransferases form two functionally nonredundant groups essential for the elongation of glucuronoxylan backbone.</title>
        <authorList>
            <person name="Lee C."/>
            <person name="Teng Q."/>
            <person name="Huang W."/>
            <person name="Zhong R."/>
            <person name="Ye Z.H."/>
        </authorList>
    </citation>
    <scope>FUNCTION</scope>
</reference>
<reference key="11">
    <citation type="journal article" date="2010" name="Plant Physiol.">
        <title>Analysis of the Arabidopsis IRX9/IRX9-L and IRX14/IRX14-L pairs of glycosyltransferase genes reveals critical contributions to biosynthesis of the hemicellulose glucuronoxylan.</title>
        <authorList>
            <person name="Wu A.M."/>
            <person name="Hoernblad E."/>
            <person name="Voxeur A."/>
            <person name="Gerber L."/>
            <person name="Rihouey C."/>
            <person name="Lerouge P."/>
            <person name="Marchant A."/>
        </authorList>
    </citation>
    <scope>FUNCTION</scope>
</reference>
<reference key="12">
    <citation type="journal article" date="2012" name="Plant Cell Physiol.">
        <title>Arabidopsis family GT43 members are xylan xylosyltransferases required for the elongation of the xylan backbone.</title>
        <authorList>
            <person name="Lee C."/>
            <person name="Zhong R."/>
            <person name="Ye Z.H."/>
        </authorList>
    </citation>
    <scope>FUNCTION</scope>
    <scope>CATALYTIC ACTIVITY</scope>
</reference>
<reference key="13">
    <citation type="journal article" date="2014" name="PLoS ONE">
        <title>Site-directed mutagenesis of IRX9, IRX9L and IRX14 proteins involved in xylan biosynthesis: glycosyltransferase activity is not required for IRX9 function in Arabidopsis.</title>
        <authorList>
            <person name="Ren Y."/>
            <person name="Hansen S.F."/>
            <person name="Ebert B."/>
            <person name="Lau J."/>
            <person name="Scheller H.V."/>
        </authorList>
    </citation>
    <scope>FUNCTION</scope>
    <scope>DISRUPTION PHENOTYPE</scope>
    <scope>MUTAGENESIS OF TRP-150; GLY-215; 215-GLY-LEU-216; GLU-252 AND CYS-333</scope>
</reference>
<comment type="function">
    <text evidence="3 4 5 6 7 8 9 10 11">Involved in the synthesis of the hemicellulose glucuronoxylan, a major component of secondary cell walls (PubMed:15980264, PubMed:16844780, PubMed:17322407, PubMed:17938130, PubMed:17944810, PubMed:20335400, PubMed:20424005). Xylan xylosyltransferase that acts cooperatively with IRX14 to achieve the successive addition of xylosyl residues during xylan backbone elongation (PubMed:22080591, PubMed:25118690).</text>
</comment>
<comment type="catalytic activity">
    <reaction evidence="10">
        <text>[(1-&gt;4)-beta-D-xylan](n) + UDP-alpha-D-xylose = [(1-&gt;4)-beta-D-xylan](n+1) + UDP + H(+)</text>
        <dbReference type="Rhea" id="RHEA:15289"/>
        <dbReference type="Rhea" id="RHEA-COMP:9548"/>
        <dbReference type="Rhea" id="RHEA-COMP:9549"/>
        <dbReference type="ChEBI" id="CHEBI:15378"/>
        <dbReference type="ChEBI" id="CHEBI:15447"/>
        <dbReference type="ChEBI" id="CHEBI:57632"/>
        <dbReference type="ChEBI" id="CHEBI:58223"/>
        <dbReference type="EC" id="2.4.2.24"/>
    </reaction>
    <physiologicalReaction direction="left-to-right" evidence="10">
        <dbReference type="Rhea" id="RHEA:15290"/>
    </physiologicalReaction>
</comment>
<comment type="subcellular location">
    <subcellularLocation>
        <location evidence="14">Golgi apparatus membrane</location>
        <topology evidence="14">Single-pass type II membrane protein</topology>
    </subcellularLocation>
</comment>
<comment type="tissue specificity">
    <text evidence="5">Expressed in developing interfascicular fibers, primary and secondary xylem in stems and developing secondary xylem in roots.</text>
</comment>
<comment type="disruption phenotype">
    <text evidence="3 4 5 7 11">Dwarf phenotype. Collapsed xylem vessels and reduced xylan content in cell wall.</text>
</comment>
<comment type="similarity">
    <text evidence="13">Belongs to the glycosyltransferase 43 family.</text>
</comment>
<proteinExistence type="evidence at protein level"/>
<sequence>MGSLERSKKKAQVWKKAVIHFSLCFVMGFFTGFAPAGKASFFSNFETTSYTSTKSPIPPQPFENATYTQHSLLNRTLINSQSQAPAPAESREAEGETRSLSEKEDENQVKVTPRGLVIVVTPIITKDRYKNVLLRRMANTLRLVPPPLLWIVVEKHSDGEEKSSSTMLRKTGIMYRRIVFKEDFTSLESELDHQRNLALRHIEHHKLSGIVHFAGLNNIYDLDFFVKIRDIEVFGTWPMALLSANRKRVVVEGPVCESSQVLGWHLRKINNETETKPPIHISSFAFNSSILWDPERWGRPSSVEGTKQDSIKYVKQVVLEDDTKLKGLPAQDCSKIMLWRLKFPTRTRLST</sequence>
<evidence type="ECO:0000255" key="1"/>
<evidence type="ECO:0000256" key="2">
    <source>
        <dbReference type="SAM" id="MobiDB-lite"/>
    </source>
</evidence>
<evidence type="ECO:0000269" key="3">
    <source>
    </source>
</evidence>
<evidence type="ECO:0000269" key="4">
    <source>
    </source>
</evidence>
<evidence type="ECO:0000269" key="5">
    <source>
    </source>
</evidence>
<evidence type="ECO:0000269" key="6">
    <source>
    </source>
</evidence>
<evidence type="ECO:0000269" key="7">
    <source>
    </source>
</evidence>
<evidence type="ECO:0000269" key="8">
    <source>
    </source>
</evidence>
<evidence type="ECO:0000269" key="9">
    <source>
    </source>
</evidence>
<evidence type="ECO:0000269" key="10">
    <source>
    </source>
</evidence>
<evidence type="ECO:0000269" key="11">
    <source>
    </source>
</evidence>
<evidence type="ECO:0000303" key="12">
    <source>
    </source>
</evidence>
<evidence type="ECO:0000305" key="13"/>
<evidence type="ECO:0000305" key="14">
    <source>
    </source>
</evidence>
<evidence type="ECO:0000312" key="15">
    <source>
        <dbReference type="Araport" id="AT2G37090"/>
    </source>
</evidence>
<evidence type="ECO:0000312" key="16">
    <source>
        <dbReference type="EMBL" id="AAD18150.1"/>
    </source>
</evidence>
<feature type="chain" id="PRO_0000407563" description="Beta-1,4-xylosyltransferase IRX9">
    <location>
        <begin position="1"/>
        <end position="351"/>
    </location>
</feature>
<feature type="topological domain" description="Cytoplasmic" evidence="1">
    <location>
        <begin position="1"/>
        <end position="16"/>
    </location>
</feature>
<feature type="transmembrane region" description="Helical; Signal-anchor for type II membrane protein" evidence="1">
    <location>
        <begin position="17"/>
        <end position="36"/>
    </location>
</feature>
<feature type="topological domain" description="Lumenal" evidence="1">
    <location>
        <begin position="37"/>
        <end position="351"/>
    </location>
</feature>
<feature type="region of interest" description="Disordered" evidence="2">
    <location>
        <begin position="80"/>
        <end position="107"/>
    </location>
</feature>
<feature type="compositionally biased region" description="Basic and acidic residues" evidence="2">
    <location>
        <begin position="89"/>
        <end position="107"/>
    </location>
</feature>
<feature type="glycosylation site" description="N-linked (GlcNAc...) asparagine" evidence="1">
    <location>
        <position position="64"/>
    </location>
</feature>
<feature type="glycosylation site" description="N-linked (GlcNAc...) asparagine" evidence="1">
    <location>
        <position position="74"/>
    </location>
</feature>
<feature type="glycosylation site" description="N-linked (GlcNAc...) asparagine" evidence="1">
    <location>
        <position position="271"/>
    </location>
</feature>
<feature type="glycosylation site" description="N-linked (GlcNAc...) asparagine" evidence="1">
    <location>
        <position position="287"/>
    </location>
</feature>
<feature type="mutagenesis site" description="Complements irregular xylem phenotype of irx9 mutant." evidence="11">
    <original>W</original>
    <variation>A</variation>
    <location>
        <position position="150"/>
    </location>
</feature>
<feature type="mutagenesis site" description="Complements irregular xylem phenotype of irx9 mutant." evidence="11">
    <original>GL</original>
    <variation>DD</variation>
    <location>
        <begin position="215"/>
        <end position="216"/>
    </location>
</feature>
<feature type="mutagenesis site" description="Complements irregular xylem phenotype of irx9 mutant." evidence="11">
    <original>G</original>
    <variation>W</variation>
    <location>
        <position position="215"/>
    </location>
</feature>
<feature type="mutagenesis site" description="Complements irregular xylem phenotype of irx9 mutant." evidence="11">
    <original>E</original>
    <variation>A</variation>
    <location>
        <position position="252"/>
    </location>
</feature>
<feature type="mutagenesis site" description="Complements irregular xylem phenotype of irx9 mutant." evidence="11">
    <original>C</original>
    <variation>A</variation>
    <location>
        <position position="333"/>
    </location>
</feature>
<name>IRX9_ARATH</name>
<gene>
    <name evidence="12" type="primary">IRX9</name>
    <name evidence="15" type="ordered locus">At2g37090</name>
    <name evidence="16" type="ORF">T2N18.15</name>
</gene>
<organism>
    <name type="scientific">Arabidopsis thaliana</name>
    <name type="common">Mouse-ear cress</name>
    <dbReference type="NCBI Taxonomy" id="3702"/>
    <lineage>
        <taxon>Eukaryota</taxon>
        <taxon>Viridiplantae</taxon>
        <taxon>Streptophyta</taxon>
        <taxon>Embryophyta</taxon>
        <taxon>Tracheophyta</taxon>
        <taxon>Spermatophyta</taxon>
        <taxon>Magnoliopsida</taxon>
        <taxon>eudicotyledons</taxon>
        <taxon>Gunneridae</taxon>
        <taxon>Pentapetalae</taxon>
        <taxon>rosids</taxon>
        <taxon>malvids</taxon>
        <taxon>Brassicales</taxon>
        <taxon>Brassicaceae</taxon>
        <taxon>Camelineae</taxon>
        <taxon>Arabidopsis</taxon>
    </lineage>
</organism>
<keyword id="KW-0961">Cell wall biogenesis/degradation</keyword>
<keyword id="KW-0325">Glycoprotein</keyword>
<keyword id="KW-0328">Glycosyltransferase</keyword>
<keyword id="KW-0333">Golgi apparatus</keyword>
<keyword id="KW-0472">Membrane</keyword>
<keyword id="KW-1185">Reference proteome</keyword>
<keyword id="KW-0735">Signal-anchor</keyword>
<keyword id="KW-0808">Transferase</keyword>
<keyword id="KW-0812">Transmembrane</keyword>
<keyword id="KW-1133">Transmembrane helix</keyword>
<dbReference type="EC" id="2.4.2.24" evidence="10"/>
<dbReference type="EMBL" id="AC006260">
    <property type="protein sequence ID" value="AAD18150.1"/>
    <property type="molecule type" value="Genomic_DNA"/>
</dbReference>
<dbReference type="EMBL" id="CP002685">
    <property type="protein sequence ID" value="AEC09350.1"/>
    <property type="molecule type" value="Genomic_DNA"/>
</dbReference>
<dbReference type="EMBL" id="BT015044">
    <property type="protein sequence ID" value="AAT71916.1"/>
    <property type="molecule type" value="mRNA"/>
</dbReference>
<dbReference type="EMBL" id="BT015838">
    <property type="protein sequence ID" value="AAU94401.1"/>
    <property type="molecule type" value="mRNA"/>
</dbReference>
<dbReference type="PIR" id="D84788">
    <property type="entry name" value="D84788"/>
</dbReference>
<dbReference type="RefSeq" id="NP_181246.1">
    <property type="nucleotide sequence ID" value="NM_129265.3"/>
</dbReference>
<dbReference type="SMR" id="Q9ZQC6"/>
<dbReference type="FunCoup" id="Q9ZQC6">
    <property type="interactions" value="691"/>
</dbReference>
<dbReference type="STRING" id="3702.Q9ZQC6"/>
<dbReference type="CAZy" id="GT43">
    <property type="family name" value="Glycosyltransferase Family 43"/>
</dbReference>
<dbReference type="GlyCosmos" id="Q9ZQC6">
    <property type="glycosylation" value="4 sites, No reported glycans"/>
</dbReference>
<dbReference type="GlyGen" id="Q9ZQC6">
    <property type="glycosylation" value="4 sites"/>
</dbReference>
<dbReference type="PaxDb" id="3702-AT2G37090.1"/>
<dbReference type="ProteomicsDB" id="247295"/>
<dbReference type="EnsemblPlants" id="AT2G37090.1">
    <property type="protein sequence ID" value="AT2G37090.1"/>
    <property type="gene ID" value="AT2G37090"/>
</dbReference>
<dbReference type="GeneID" id="818285"/>
<dbReference type="Gramene" id="AT2G37090.1">
    <property type="protein sequence ID" value="AT2G37090.1"/>
    <property type="gene ID" value="AT2G37090"/>
</dbReference>
<dbReference type="KEGG" id="ath:AT2G37090"/>
<dbReference type="Araport" id="AT2G37090"/>
<dbReference type="TAIR" id="AT2G37090">
    <property type="gene designation" value="IRX9"/>
</dbReference>
<dbReference type="eggNOG" id="KOG1476">
    <property type="taxonomic scope" value="Eukaryota"/>
</dbReference>
<dbReference type="HOGENOM" id="CLU_044006_2_0_1"/>
<dbReference type="InParanoid" id="Q9ZQC6"/>
<dbReference type="OMA" id="RNVALAW"/>
<dbReference type="OrthoDB" id="675023at2759"/>
<dbReference type="PhylomeDB" id="Q9ZQC6"/>
<dbReference type="BioCyc" id="ARA:AT2G37090-MONOMER"/>
<dbReference type="BRENDA" id="2.4.2.24">
    <property type="organism ID" value="399"/>
</dbReference>
<dbReference type="PRO" id="PR:Q9ZQC6"/>
<dbReference type="Proteomes" id="UP000006548">
    <property type="component" value="Chromosome 2"/>
</dbReference>
<dbReference type="ExpressionAtlas" id="Q9ZQC6">
    <property type="expression patterns" value="baseline and differential"/>
</dbReference>
<dbReference type="GO" id="GO:0005794">
    <property type="term" value="C:Golgi apparatus"/>
    <property type="evidence" value="ECO:0000314"/>
    <property type="project" value="TAIR"/>
</dbReference>
<dbReference type="GO" id="GO:0000139">
    <property type="term" value="C:Golgi membrane"/>
    <property type="evidence" value="ECO:0007669"/>
    <property type="project" value="UniProtKB-SubCell"/>
</dbReference>
<dbReference type="GO" id="GO:0047517">
    <property type="term" value="F:1,4-beta-D-xylan synthase activity"/>
    <property type="evidence" value="ECO:0007669"/>
    <property type="project" value="UniProtKB-EC"/>
</dbReference>
<dbReference type="GO" id="GO:0015018">
    <property type="term" value="F:galactosylgalactosylxylosylprotein 3-beta-glucuronosyltransferase activity"/>
    <property type="evidence" value="ECO:0007669"/>
    <property type="project" value="InterPro"/>
</dbReference>
<dbReference type="GO" id="GO:0042285">
    <property type="term" value="F:xylosyltransferase activity"/>
    <property type="evidence" value="ECO:0000315"/>
    <property type="project" value="TAIR"/>
</dbReference>
<dbReference type="GO" id="GO:0071555">
    <property type="term" value="P:cell wall organization"/>
    <property type="evidence" value="ECO:0007669"/>
    <property type="project" value="UniProtKB-KW"/>
</dbReference>
<dbReference type="GO" id="GO:0010417">
    <property type="term" value="P:glucuronoxylan biosynthetic process"/>
    <property type="evidence" value="ECO:0000316"/>
    <property type="project" value="TAIR"/>
</dbReference>
<dbReference type="GO" id="GO:0010413">
    <property type="term" value="P:glucuronoxylan metabolic process"/>
    <property type="evidence" value="ECO:0000315"/>
    <property type="project" value="TAIR"/>
</dbReference>
<dbReference type="GO" id="GO:0009834">
    <property type="term" value="P:plant-type secondary cell wall biogenesis"/>
    <property type="evidence" value="ECO:0000315"/>
    <property type="project" value="TAIR"/>
</dbReference>
<dbReference type="GO" id="GO:0045492">
    <property type="term" value="P:xylan biosynthetic process"/>
    <property type="evidence" value="ECO:0000315"/>
    <property type="project" value="TAIR"/>
</dbReference>
<dbReference type="CDD" id="cd00218">
    <property type="entry name" value="GlcAT-I"/>
    <property type="match status" value="1"/>
</dbReference>
<dbReference type="FunFam" id="3.90.550.10:FF:000084">
    <property type="entry name" value="Glycosyltransferases"/>
    <property type="match status" value="1"/>
</dbReference>
<dbReference type="Gene3D" id="3.90.550.10">
    <property type="entry name" value="Spore Coat Polysaccharide Biosynthesis Protein SpsA, Chain A"/>
    <property type="match status" value="1"/>
</dbReference>
<dbReference type="InterPro" id="IPR005027">
    <property type="entry name" value="Glyco_trans_43"/>
</dbReference>
<dbReference type="InterPro" id="IPR029044">
    <property type="entry name" value="Nucleotide-diphossugar_trans"/>
</dbReference>
<dbReference type="PANTHER" id="PTHR10896:SF59">
    <property type="entry name" value="BETA-1,4-XYLOSYLTRANSFERASE IRX9"/>
    <property type="match status" value="1"/>
</dbReference>
<dbReference type="PANTHER" id="PTHR10896">
    <property type="entry name" value="GALACTOSYLGALACTOSYLXYLOSYLPROTEIN 3-BETA-GLUCURONOSYLTRANSFERASE BETA-1,3-GLUCURONYLTRANSFERASE"/>
    <property type="match status" value="1"/>
</dbReference>
<dbReference type="Pfam" id="PF03360">
    <property type="entry name" value="Glyco_transf_43"/>
    <property type="match status" value="1"/>
</dbReference>
<dbReference type="SUPFAM" id="SSF53448">
    <property type="entry name" value="Nucleotide-diphospho-sugar transferases"/>
    <property type="match status" value="1"/>
</dbReference>
<accession>Q9ZQC6</accession>